<sequence length="520" mass="57488">MSNISTDLQDVEKIIVLDYGSQYNQLISRRIREIGVFSELKSHKISAAEVREVNPVGIILSGGPNSVYEDGSFDIDPEIFELGIPILGICYGMQLLTHKLGGKVVPAGDAGNREYGQSTLTHTPSALFESTPDEQTVLMSHGDAVTEIPADFVRTGTSADCLYAAIENPDKHIYGIQFHPEVRHSVYGNDILRNFALNICKAKGDWSMDNFIDMQIKKIRETVGDKRVLLGLSGGVDSSVVGVLLQKAIGDQLICIFVDHGLLRKGEADQVMDMLGGKFGLNIVKADAAKRFLDKLAGVSDPEQKRKIIGNEFVYVFDDEASKLKDVKFLAQGTLYTDVIESGTDTAQTIKSHHNVGGLPEDMQFELIEPLNTLYKDEVRALGTELGMPDHIVWRQPFPGPGLAIRVMGEITEEKLETVRESDAILREEIAKAGLDRDIWQYFTVNTGVRSVGVMGDGRTYDYTIAIRAITSIDGMTADFAKIPWEVLQKISVRIVNEVDHVNRIVYDITSKPPATVEWE</sequence>
<evidence type="ECO:0000255" key="1">
    <source>
        <dbReference type="HAMAP-Rule" id="MF_00344"/>
    </source>
</evidence>
<name>GUAA_STRPJ</name>
<dbReference type="EC" id="6.3.5.2" evidence="1"/>
<dbReference type="EMBL" id="FM211187">
    <property type="protein sequence ID" value="CAR69203.1"/>
    <property type="molecule type" value="Genomic_DNA"/>
</dbReference>
<dbReference type="RefSeq" id="WP_000065720.1">
    <property type="nucleotide sequence ID" value="NC_011900.1"/>
</dbReference>
<dbReference type="SMR" id="B8ZKZ5"/>
<dbReference type="MEROPS" id="C26.957"/>
<dbReference type="KEGG" id="sne:SPN23F14100"/>
<dbReference type="HOGENOM" id="CLU_014340_0_5_9"/>
<dbReference type="UniPathway" id="UPA00189">
    <property type="reaction ID" value="UER00296"/>
</dbReference>
<dbReference type="GO" id="GO:0005829">
    <property type="term" value="C:cytosol"/>
    <property type="evidence" value="ECO:0007669"/>
    <property type="project" value="TreeGrafter"/>
</dbReference>
<dbReference type="GO" id="GO:0005524">
    <property type="term" value="F:ATP binding"/>
    <property type="evidence" value="ECO:0007669"/>
    <property type="project" value="UniProtKB-UniRule"/>
</dbReference>
<dbReference type="GO" id="GO:0003921">
    <property type="term" value="F:GMP synthase activity"/>
    <property type="evidence" value="ECO:0007669"/>
    <property type="project" value="InterPro"/>
</dbReference>
<dbReference type="CDD" id="cd01742">
    <property type="entry name" value="GATase1_GMP_Synthase"/>
    <property type="match status" value="1"/>
</dbReference>
<dbReference type="CDD" id="cd01997">
    <property type="entry name" value="GMP_synthase_C"/>
    <property type="match status" value="1"/>
</dbReference>
<dbReference type="FunFam" id="3.30.300.10:FF:000002">
    <property type="entry name" value="GMP synthase [glutamine-hydrolyzing]"/>
    <property type="match status" value="1"/>
</dbReference>
<dbReference type="FunFam" id="3.40.50.620:FF:000001">
    <property type="entry name" value="GMP synthase [glutamine-hydrolyzing]"/>
    <property type="match status" value="1"/>
</dbReference>
<dbReference type="FunFam" id="3.40.50.880:FF:000001">
    <property type="entry name" value="GMP synthase [glutamine-hydrolyzing]"/>
    <property type="match status" value="1"/>
</dbReference>
<dbReference type="Gene3D" id="3.30.300.10">
    <property type="match status" value="1"/>
</dbReference>
<dbReference type="Gene3D" id="3.40.50.880">
    <property type="match status" value="1"/>
</dbReference>
<dbReference type="Gene3D" id="3.40.50.620">
    <property type="entry name" value="HUPs"/>
    <property type="match status" value="1"/>
</dbReference>
<dbReference type="HAMAP" id="MF_00344">
    <property type="entry name" value="GMP_synthase"/>
    <property type="match status" value="1"/>
</dbReference>
<dbReference type="InterPro" id="IPR029062">
    <property type="entry name" value="Class_I_gatase-like"/>
</dbReference>
<dbReference type="InterPro" id="IPR017926">
    <property type="entry name" value="GATASE"/>
</dbReference>
<dbReference type="InterPro" id="IPR001674">
    <property type="entry name" value="GMP_synth_C"/>
</dbReference>
<dbReference type="InterPro" id="IPR004739">
    <property type="entry name" value="GMP_synth_GATase"/>
</dbReference>
<dbReference type="InterPro" id="IPR022955">
    <property type="entry name" value="GMP_synthase"/>
</dbReference>
<dbReference type="InterPro" id="IPR025777">
    <property type="entry name" value="GMPS_ATP_PPase_dom"/>
</dbReference>
<dbReference type="InterPro" id="IPR022310">
    <property type="entry name" value="NAD/GMP_synthase"/>
</dbReference>
<dbReference type="InterPro" id="IPR014729">
    <property type="entry name" value="Rossmann-like_a/b/a_fold"/>
</dbReference>
<dbReference type="NCBIfam" id="TIGR00884">
    <property type="entry name" value="guaA_Cterm"/>
    <property type="match status" value="1"/>
</dbReference>
<dbReference type="NCBIfam" id="TIGR00888">
    <property type="entry name" value="guaA_Nterm"/>
    <property type="match status" value="1"/>
</dbReference>
<dbReference type="NCBIfam" id="NF000848">
    <property type="entry name" value="PRK00074.1"/>
    <property type="match status" value="1"/>
</dbReference>
<dbReference type="PANTHER" id="PTHR11922:SF2">
    <property type="entry name" value="GMP SYNTHASE [GLUTAMINE-HYDROLYZING]"/>
    <property type="match status" value="1"/>
</dbReference>
<dbReference type="PANTHER" id="PTHR11922">
    <property type="entry name" value="GMP SYNTHASE-RELATED"/>
    <property type="match status" value="1"/>
</dbReference>
<dbReference type="Pfam" id="PF00117">
    <property type="entry name" value="GATase"/>
    <property type="match status" value="1"/>
</dbReference>
<dbReference type="Pfam" id="PF00958">
    <property type="entry name" value="GMP_synt_C"/>
    <property type="match status" value="1"/>
</dbReference>
<dbReference type="Pfam" id="PF02540">
    <property type="entry name" value="NAD_synthase"/>
    <property type="match status" value="1"/>
</dbReference>
<dbReference type="PRINTS" id="PR00097">
    <property type="entry name" value="ANTSNTHASEII"/>
</dbReference>
<dbReference type="PRINTS" id="PR00099">
    <property type="entry name" value="CPSGATASE"/>
</dbReference>
<dbReference type="PRINTS" id="PR00096">
    <property type="entry name" value="GATASE"/>
</dbReference>
<dbReference type="SUPFAM" id="SSF52402">
    <property type="entry name" value="Adenine nucleotide alpha hydrolases-like"/>
    <property type="match status" value="1"/>
</dbReference>
<dbReference type="SUPFAM" id="SSF52317">
    <property type="entry name" value="Class I glutamine amidotransferase-like"/>
    <property type="match status" value="1"/>
</dbReference>
<dbReference type="PROSITE" id="PS51273">
    <property type="entry name" value="GATASE_TYPE_1"/>
    <property type="match status" value="1"/>
</dbReference>
<dbReference type="PROSITE" id="PS51553">
    <property type="entry name" value="GMPS_ATP_PPASE"/>
    <property type="match status" value="1"/>
</dbReference>
<accession>B8ZKZ5</accession>
<comment type="function">
    <text evidence="1">Catalyzes the synthesis of GMP from XMP.</text>
</comment>
<comment type="catalytic activity">
    <reaction evidence="1">
        <text>XMP + L-glutamine + ATP + H2O = GMP + L-glutamate + AMP + diphosphate + 2 H(+)</text>
        <dbReference type="Rhea" id="RHEA:11680"/>
        <dbReference type="ChEBI" id="CHEBI:15377"/>
        <dbReference type="ChEBI" id="CHEBI:15378"/>
        <dbReference type="ChEBI" id="CHEBI:29985"/>
        <dbReference type="ChEBI" id="CHEBI:30616"/>
        <dbReference type="ChEBI" id="CHEBI:33019"/>
        <dbReference type="ChEBI" id="CHEBI:57464"/>
        <dbReference type="ChEBI" id="CHEBI:58115"/>
        <dbReference type="ChEBI" id="CHEBI:58359"/>
        <dbReference type="ChEBI" id="CHEBI:456215"/>
        <dbReference type="EC" id="6.3.5.2"/>
    </reaction>
</comment>
<comment type="pathway">
    <text evidence="1">Purine metabolism; GMP biosynthesis; GMP from XMP (L-Gln route): step 1/1.</text>
</comment>
<comment type="subunit">
    <text evidence="1">Homodimer.</text>
</comment>
<reference key="1">
    <citation type="journal article" date="2009" name="J. Bacteriol.">
        <title>Role of conjugative elements in the evolution of the multidrug-resistant pandemic clone Streptococcus pneumoniae Spain23F ST81.</title>
        <authorList>
            <person name="Croucher N.J."/>
            <person name="Walker D."/>
            <person name="Romero P."/>
            <person name="Lennard N."/>
            <person name="Paterson G.K."/>
            <person name="Bason N.C."/>
            <person name="Mitchell A.M."/>
            <person name="Quail M.A."/>
            <person name="Andrew P.W."/>
            <person name="Parkhill J."/>
            <person name="Bentley S.D."/>
            <person name="Mitchell T.J."/>
        </authorList>
    </citation>
    <scope>NUCLEOTIDE SEQUENCE [LARGE SCALE GENOMIC DNA]</scope>
    <source>
        <strain>ATCC 700669 / Spain 23F-1</strain>
    </source>
</reference>
<keyword id="KW-0067">ATP-binding</keyword>
<keyword id="KW-0315">Glutamine amidotransferase</keyword>
<keyword id="KW-0332">GMP biosynthesis</keyword>
<keyword id="KW-0436">Ligase</keyword>
<keyword id="KW-0547">Nucleotide-binding</keyword>
<keyword id="KW-0658">Purine biosynthesis</keyword>
<proteinExistence type="inferred from homology"/>
<protein>
    <recommendedName>
        <fullName evidence="1">GMP synthase [glutamine-hydrolyzing]</fullName>
        <ecNumber evidence="1">6.3.5.2</ecNumber>
    </recommendedName>
    <alternativeName>
        <fullName evidence="1">GMP synthetase</fullName>
    </alternativeName>
    <alternativeName>
        <fullName evidence="1">Glutamine amidotransferase</fullName>
    </alternativeName>
</protein>
<organism>
    <name type="scientific">Streptococcus pneumoniae (strain ATCC 700669 / Spain 23F-1)</name>
    <dbReference type="NCBI Taxonomy" id="561276"/>
    <lineage>
        <taxon>Bacteria</taxon>
        <taxon>Bacillati</taxon>
        <taxon>Bacillota</taxon>
        <taxon>Bacilli</taxon>
        <taxon>Lactobacillales</taxon>
        <taxon>Streptococcaceae</taxon>
        <taxon>Streptococcus</taxon>
    </lineage>
</organism>
<feature type="chain" id="PRO_1000133384" description="GMP synthase [glutamine-hydrolyzing]">
    <location>
        <begin position="1"/>
        <end position="520"/>
    </location>
</feature>
<feature type="domain" description="Glutamine amidotransferase type-1" evidence="1">
    <location>
        <begin position="13"/>
        <end position="205"/>
    </location>
</feature>
<feature type="domain" description="GMPS ATP-PPase" evidence="1">
    <location>
        <begin position="206"/>
        <end position="395"/>
    </location>
</feature>
<feature type="active site" description="Nucleophile" evidence="1">
    <location>
        <position position="90"/>
    </location>
</feature>
<feature type="active site" evidence="1">
    <location>
        <position position="179"/>
    </location>
</feature>
<feature type="active site" evidence="1">
    <location>
        <position position="181"/>
    </location>
</feature>
<feature type="binding site" evidence="1">
    <location>
        <begin position="233"/>
        <end position="239"/>
    </location>
    <ligand>
        <name>ATP</name>
        <dbReference type="ChEBI" id="CHEBI:30616"/>
    </ligand>
</feature>
<gene>
    <name evidence="1" type="primary">guaA</name>
    <name type="ordered locus">SPN23F14100</name>
</gene>